<proteinExistence type="evidence at protein level"/>
<accession>O13892</accession>
<accession>O36013</accession>
<evidence type="ECO:0000255" key="1"/>
<evidence type="ECO:0000256" key="2">
    <source>
        <dbReference type="SAM" id="MobiDB-lite"/>
    </source>
</evidence>
<evidence type="ECO:0000269" key="3">
    <source>
    </source>
</evidence>
<evidence type="ECO:0000269" key="4">
    <source>
    </source>
</evidence>
<evidence type="ECO:0000269" key="5">
    <source>
    </source>
</evidence>
<evidence type="ECO:0000303" key="6">
    <source>
    </source>
</evidence>
<evidence type="ECO:0000305" key="7"/>
<evidence type="ECO:0007744" key="8">
    <source>
        <dbReference type="PDB" id="4Q2S"/>
    </source>
</evidence>
<evidence type="ECO:0007829" key="9">
    <source>
        <dbReference type="PDB" id="4Q2S"/>
    </source>
</evidence>
<comment type="function">
    <text evidence="4 5">Involved in P-body formation. Acts as a functional homolog of human EDC4, which plays a role in mRNA decapping in the process of mRNA degradation. Enhances the decapping activity of dcp2 (PubMed:23319050). Together with edc3, acts as a scaffolding protein sufficient for the phase transition of the components of the 5' to 3' mRNA degradation machinery to form P-bodies. Intermolecular interactions between the edc3 Sm domain and at least 10 helical leucine-rich motifs in dcp2 and pdc1 build the core of the interaction network of this spontaneous clustering process (PubMed:24862735).</text>
</comment>
<comment type="subunit">
    <text evidence="4">Interacts with dcp2; via C-terminus.</text>
</comment>
<comment type="subcellular location">
    <subcellularLocation>
        <location evidence="4">Cytoplasm</location>
        <location evidence="4">P-body</location>
    </subcellularLocation>
    <text evidence="4">Is concentrated in several cytoplasmic foci called P bodies (or cytoplasmic processing bodies) which represent sites of mRNA decapping and 5' to 3' exonucleotidic decay.</text>
</comment>
<comment type="similarity">
    <text evidence="7">Belongs to the WD repeat EDC4 family.</text>
</comment>
<sequence length="1076" mass="119231">MNEQDLLNSLRRDLNLPNLGKSHDGSEAVESTFPEKKESSLSAQQPHVDDQRSSLLSLLNAGLNASNQSPSNSGPKYYASHSSSTDALLQAFRDGAKPSGTASGADVKRSDSESTEATSNERPFNPVSAANLERLLMSSTGPQTPINGELKSNDSQDTAFQSSRNMPSDTSVASPDYSHSQSSSPIANYQESGNSEEPHKAEEQQQLSIYQLDNPGSGNYVWETVISPDKFETSTFAKCERNDIAIINRELDAQDNQLIHTNEDFIAYAVHREPIIRVIEISTGKSFLLHNNSPNKFVSVAWGNDSVIKNRLMAIDTTGQVLIFAVDIATSTSEIIFQLSGAQSLSDPIKSRFHWYPKSSTRFAVALSKHIIFFDLDLLNNISFPIPRSINAIQQLPCFLIDTGISAKEYDFSYDGTVFATVDKDALIKIYTVPTTFPSTPDKRPVPSEVSPIAIFTTRMERGPSKNYEKPINLRFISTPGTNNSRYLVIVYVMNQLITLFDLYSKRNIQTFRFNNRPTAATTTSFSQFSVDNERSTLLVGNPPSNSIYFFLFAKDETVSEQAPIYNSTYELILASLNTSEPVPADAKFSVIVAKKFEKAACISFTACKILESEDKYCIVVSNTDGYEYYSIPTSILDKTGKTVRSLESVQNYDADIGGTIDLTERHSTASPSTVNSGFSTPRSQATGFSKKKKDKGERFETKDKSSSVLSPSSYSASTFDAIPMDSIVSNILASLEKSVHKNYESLRSQLLEYKAANEKHTEAILSVVSSTLTENTGKILESVVEKSMQVALKEEIANSVRNALKNNLEKIESFLENSIAELQNSVREDFDKQTSSLAQLRYSIQNVAHAQKESEVKYNELNEQVKTLEGYVETVLEKFNDLKIENKVPETAPDVVPSSYPPAAESNVSVSSDTSTKDVEKQEPSSAEQPAQGIAESLRRLKEYVKAGSVKECVAEWCNMPSVAGFDVLSEISYDRMLENCSNLLLLTFIYHISLLDSVDDDRLSKRMEYISRICLNIDVNDPKVETVVHPVLTLTREALLRQSEFFSPIFKRRLVVLLRALDGKISEISVASSN</sequence>
<gene>
    <name evidence="6" type="primary">pdc1</name>
    <name type="ORF">SPAC20G4.08</name>
    <name type="ORF">SPAC4F10.01</name>
</gene>
<name>EDC4L_SCHPO</name>
<keyword id="KW-0002">3D-structure</keyword>
<keyword id="KW-0963">Cytoplasm</keyword>
<keyword id="KW-0597">Phosphoprotein</keyword>
<keyword id="KW-1185">Reference proteome</keyword>
<keyword id="KW-0677">Repeat</keyword>
<keyword id="KW-0853">WD repeat</keyword>
<organism>
    <name type="scientific">Schizosaccharomyces pombe (strain 972 / ATCC 24843)</name>
    <name type="common">Fission yeast</name>
    <dbReference type="NCBI Taxonomy" id="284812"/>
    <lineage>
        <taxon>Eukaryota</taxon>
        <taxon>Fungi</taxon>
        <taxon>Dikarya</taxon>
        <taxon>Ascomycota</taxon>
        <taxon>Taphrinomycotina</taxon>
        <taxon>Schizosaccharomycetes</taxon>
        <taxon>Schizosaccharomycetales</taxon>
        <taxon>Schizosaccharomycetaceae</taxon>
        <taxon>Schizosaccharomyces</taxon>
    </lineage>
</organism>
<dbReference type="EMBL" id="CU329670">
    <property type="protein sequence ID" value="CAB11257.2"/>
    <property type="molecule type" value="Genomic_DNA"/>
</dbReference>
<dbReference type="PIR" id="T38122">
    <property type="entry name" value="T38122"/>
</dbReference>
<dbReference type="RefSeq" id="XP_001713113.1">
    <property type="nucleotide sequence ID" value="XM_001713061.2"/>
</dbReference>
<dbReference type="PDB" id="4Q2S">
    <property type="method" value="X-ray"/>
    <property type="resolution" value="1.35 A"/>
    <property type="chains" value="A=932-1070"/>
</dbReference>
<dbReference type="PDBsum" id="4Q2S"/>
<dbReference type="SMR" id="O13892"/>
<dbReference type="BioGRID" id="858105">
    <property type="interactions" value="23"/>
</dbReference>
<dbReference type="FunCoup" id="O13892">
    <property type="interactions" value="10"/>
</dbReference>
<dbReference type="STRING" id="284812.O13892"/>
<dbReference type="iPTMnet" id="O13892"/>
<dbReference type="PaxDb" id="4896-SPAC20G4.08.1"/>
<dbReference type="EnsemblFungi" id="SPAC20G4.08.1">
    <property type="protein sequence ID" value="SPAC20G4.08.1:pep"/>
    <property type="gene ID" value="SPAC20G4.08"/>
</dbReference>
<dbReference type="PomBase" id="SPAC20G4.08">
    <property type="gene designation" value="pdc1"/>
</dbReference>
<dbReference type="VEuPathDB" id="FungiDB:SPAC20G4.08"/>
<dbReference type="HOGENOM" id="CLU_286851_0_0_1"/>
<dbReference type="InParanoid" id="O13892"/>
<dbReference type="OMA" id="KHIIFFD"/>
<dbReference type="EvolutionaryTrace" id="O13892"/>
<dbReference type="PRO" id="PR:O13892"/>
<dbReference type="Proteomes" id="UP000002485">
    <property type="component" value="Chromosome I"/>
</dbReference>
<dbReference type="GO" id="GO:0005737">
    <property type="term" value="C:cytoplasm"/>
    <property type="evidence" value="ECO:0007005"/>
    <property type="project" value="PomBase"/>
</dbReference>
<dbReference type="GO" id="GO:0010494">
    <property type="term" value="C:cytoplasmic stress granule"/>
    <property type="evidence" value="ECO:0000314"/>
    <property type="project" value="PomBase"/>
</dbReference>
<dbReference type="GO" id="GO:0000932">
    <property type="term" value="C:P-body"/>
    <property type="evidence" value="ECO:0000314"/>
    <property type="project" value="PomBase"/>
</dbReference>
<dbReference type="GO" id="GO:0060090">
    <property type="term" value="F:molecular adaptor activity"/>
    <property type="evidence" value="ECO:0000269"/>
    <property type="project" value="PomBase"/>
</dbReference>
<dbReference type="GO" id="GO:0140693">
    <property type="term" value="F:molecular condensate scaffold activity"/>
    <property type="evidence" value="ECO:0000314"/>
    <property type="project" value="PomBase"/>
</dbReference>
<dbReference type="GO" id="GO:0031087">
    <property type="term" value="P:deadenylation-independent decapping of nuclear-transcribed mRNA"/>
    <property type="evidence" value="ECO:0000318"/>
    <property type="project" value="GO_Central"/>
</dbReference>
<dbReference type="GO" id="GO:0033962">
    <property type="term" value="P:P-body assembly"/>
    <property type="evidence" value="ECO:0000315"/>
    <property type="project" value="PomBase"/>
</dbReference>
<dbReference type="FunFam" id="2.130.10.10:FF:000817">
    <property type="entry name" value="WGS project CABT00000000 data, contig 2.15"/>
    <property type="match status" value="1"/>
</dbReference>
<dbReference type="Gene3D" id="2.130.10.10">
    <property type="entry name" value="YVTN repeat-like/Quinoprotein amine dehydrogenase"/>
    <property type="match status" value="1"/>
</dbReference>
<dbReference type="InterPro" id="IPR055393">
    <property type="entry name" value="Beta-prop_EDC4L"/>
</dbReference>
<dbReference type="InterPro" id="IPR045152">
    <property type="entry name" value="EDC4-like"/>
</dbReference>
<dbReference type="InterPro" id="IPR054301">
    <property type="entry name" value="Pdc1_Ge1"/>
</dbReference>
<dbReference type="InterPro" id="IPR015943">
    <property type="entry name" value="WD40/YVTN_repeat-like_dom_sf"/>
</dbReference>
<dbReference type="InterPro" id="IPR036322">
    <property type="entry name" value="WD40_repeat_dom_sf"/>
</dbReference>
<dbReference type="PANTHER" id="PTHR15598">
    <property type="entry name" value="ENHANCER OF MRNA-DECAPPING PROTEIN 4"/>
    <property type="match status" value="1"/>
</dbReference>
<dbReference type="PANTHER" id="PTHR15598:SF5">
    <property type="entry name" value="ENHANCER OF MRNA-DECAPPING PROTEIN 4"/>
    <property type="match status" value="1"/>
</dbReference>
<dbReference type="Pfam" id="PF24106">
    <property type="entry name" value="Beta-prop_EDC4L"/>
    <property type="match status" value="1"/>
</dbReference>
<dbReference type="Pfam" id="PF22063">
    <property type="entry name" value="Pdc1_Ge1"/>
    <property type="match status" value="1"/>
</dbReference>
<dbReference type="SUPFAM" id="SSF50978">
    <property type="entry name" value="WD40 repeat-like"/>
    <property type="match status" value="1"/>
</dbReference>
<reference key="1">
    <citation type="journal article" date="2002" name="Nature">
        <title>The genome sequence of Schizosaccharomyces pombe.</title>
        <authorList>
            <person name="Wood V."/>
            <person name="Gwilliam R."/>
            <person name="Rajandream M.A."/>
            <person name="Lyne M.H."/>
            <person name="Lyne R."/>
            <person name="Stewart A."/>
            <person name="Sgouros J.G."/>
            <person name="Peat N."/>
            <person name="Hayles J."/>
            <person name="Baker S.G."/>
            <person name="Basham D."/>
            <person name="Bowman S."/>
            <person name="Brooks K."/>
            <person name="Brown D."/>
            <person name="Brown S."/>
            <person name="Chillingworth T."/>
            <person name="Churcher C.M."/>
            <person name="Collins M."/>
            <person name="Connor R."/>
            <person name="Cronin A."/>
            <person name="Davis P."/>
            <person name="Feltwell T."/>
            <person name="Fraser A."/>
            <person name="Gentles S."/>
            <person name="Goble A."/>
            <person name="Hamlin N."/>
            <person name="Harris D.E."/>
            <person name="Hidalgo J."/>
            <person name="Hodgson G."/>
            <person name="Holroyd S."/>
            <person name="Hornsby T."/>
            <person name="Howarth S."/>
            <person name="Huckle E.J."/>
            <person name="Hunt S."/>
            <person name="Jagels K."/>
            <person name="James K.D."/>
            <person name="Jones L."/>
            <person name="Jones M."/>
            <person name="Leather S."/>
            <person name="McDonald S."/>
            <person name="McLean J."/>
            <person name="Mooney P."/>
            <person name="Moule S."/>
            <person name="Mungall K.L."/>
            <person name="Murphy L.D."/>
            <person name="Niblett D."/>
            <person name="Odell C."/>
            <person name="Oliver K."/>
            <person name="O'Neil S."/>
            <person name="Pearson D."/>
            <person name="Quail M.A."/>
            <person name="Rabbinowitsch E."/>
            <person name="Rutherford K.M."/>
            <person name="Rutter S."/>
            <person name="Saunders D."/>
            <person name="Seeger K."/>
            <person name="Sharp S."/>
            <person name="Skelton J."/>
            <person name="Simmonds M.N."/>
            <person name="Squares R."/>
            <person name="Squares S."/>
            <person name="Stevens K."/>
            <person name="Taylor K."/>
            <person name="Taylor R.G."/>
            <person name="Tivey A."/>
            <person name="Walsh S.V."/>
            <person name="Warren T."/>
            <person name="Whitehead S."/>
            <person name="Woodward J.R."/>
            <person name="Volckaert G."/>
            <person name="Aert R."/>
            <person name="Robben J."/>
            <person name="Grymonprez B."/>
            <person name="Weltjens I."/>
            <person name="Vanstreels E."/>
            <person name="Rieger M."/>
            <person name="Schaefer M."/>
            <person name="Mueller-Auer S."/>
            <person name="Gabel C."/>
            <person name="Fuchs M."/>
            <person name="Duesterhoeft A."/>
            <person name="Fritzc C."/>
            <person name="Holzer E."/>
            <person name="Moestl D."/>
            <person name="Hilbert H."/>
            <person name="Borzym K."/>
            <person name="Langer I."/>
            <person name="Beck A."/>
            <person name="Lehrach H."/>
            <person name="Reinhardt R."/>
            <person name="Pohl T.M."/>
            <person name="Eger P."/>
            <person name="Zimmermann W."/>
            <person name="Wedler H."/>
            <person name="Wambutt R."/>
            <person name="Purnelle B."/>
            <person name="Goffeau A."/>
            <person name="Cadieu E."/>
            <person name="Dreano S."/>
            <person name="Gloux S."/>
            <person name="Lelaure V."/>
            <person name="Mottier S."/>
            <person name="Galibert F."/>
            <person name="Aves S.J."/>
            <person name="Xiang Z."/>
            <person name="Hunt C."/>
            <person name="Moore K."/>
            <person name="Hurst S.M."/>
            <person name="Lucas M."/>
            <person name="Rochet M."/>
            <person name="Gaillardin C."/>
            <person name="Tallada V.A."/>
            <person name="Garzon A."/>
            <person name="Thode G."/>
            <person name="Daga R.R."/>
            <person name="Cruzado L."/>
            <person name="Jimenez J."/>
            <person name="Sanchez M."/>
            <person name="del Rey F."/>
            <person name="Benito J."/>
            <person name="Dominguez A."/>
            <person name="Revuelta J.L."/>
            <person name="Moreno S."/>
            <person name="Armstrong J."/>
            <person name="Forsburg S.L."/>
            <person name="Cerutti L."/>
            <person name="Lowe T."/>
            <person name="McCombie W.R."/>
            <person name="Paulsen I."/>
            <person name="Potashkin J."/>
            <person name="Shpakovski G.V."/>
            <person name="Ussery D."/>
            <person name="Barrell B.G."/>
            <person name="Nurse P."/>
        </authorList>
    </citation>
    <scope>NUCLEOTIDE SEQUENCE [LARGE SCALE GENOMIC DNA]</scope>
    <source>
        <strain>972 / ATCC 24843</strain>
    </source>
</reference>
<reference key="2">
    <citation type="journal article" date="2008" name="J. Proteome Res.">
        <title>Phosphoproteome analysis of fission yeast.</title>
        <authorList>
            <person name="Wilson-Grady J.T."/>
            <person name="Villen J."/>
            <person name="Gygi S.P."/>
        </authorList>
    </citation>
    <scope>PHOSPHORYLATION [LARGE SCALE ANALYSIS] AT SER-671; SER-673; THR-674 AND SER-1075</scope>
    <scope>IDENTIFICATION BY MASS SPECTROMETRY</scope>
</reference>
<reference key="3">
    <citation type="journal article" date="2013" name="Mol. Cell. Biol.">
        <title>Pdc1 functions in the assembly of P bodies in Schizosaccharomyces pombe.</title>
        <authorList>
            <person name="Wang C.Y."/>
            <person name="Chen W.L."/>
            <person name="Wang S.W."/>
        </authorList>
    </citation>
    <scope>FUNCTION</scope>
    <scope>SUBCELLULAR LOCATION</scope>
    <scope>INTERACTION WITH DCP2</scope>
    <scope>IDENTIFICATION BY MASS SPECTROMETRY</scope>
</reference>
<reference evidence="8" key="4">
    <citation type="journal article" date="2014" name="Angew. Chem. Int. Ed.">
        <title>In vitro reconstitution of a cellular phase-transition process that involves the mRNA decapping machinery.</title>
        <authorList>
            <person name="Fromm S.A."/>
            <person name="Kamenz J."/>
            <person name="Noeldeke E.R."/>
            <person name="Neu A."/>
            <person name="Zocher G."/>
            <person name="Sprangers R."/>
        </authorList>
    </citation>
    <scope>X-RAY CRYSTALLOGRAPHY (1.35 ANGSTROMS) OF 932-1070</scope>
</reference>
<protein>
    <recommendedName>
        <fullName evidence="7">Enhancer of mRNA-decapping protein 4-like protein pdc1</fullName>
    </recommendedName>
    <alternativeName>
        <fullName>EDC4 homolog pdc1</fullName>
    </alternativeName>
    <alternativeName>
        <fullName evidence="6">Partner of decapping enzyme protein 1</fullName>
    </alternativeName>
</protein>
<feature type="chain" id="PRO_0000116694" description="Enhancer of mRNA-decapping protein 4-like protein pdc1">
    <location>
        <begin position="1"/>
        <end position="1076"/>
    </location>
</feature>
<feature type="repeat" description="WD 1" evidence="1">
    <location>
        <begin position="292"/>
        <end position="334"/>
    </location>
</feature>
<feature type="repeat" description="WD 2" evidence="1">
    <location>
        <begin position="402"/>
        <end position="441"/>
    </location>
</feature>
<feature type="region of interest" description="Disordered" evidence="2">
    <location>
        <begin position="1"/>
        <end position="82"/>
    </location>
</feature>
<feature type="region of interest" description="Disordered" evidence="2">
    <location>
        <begin position="95"/>
        <end position="127"/>
    </location>
</feature>
<feature type="region of interest" description="Disordered" evidence="2">
    <location>
        <begin position="139"/>
        <end position="204"/>
    </location>
</feature>
<feature type="region of interest" description="Disordered" evidence="2">
    <location>
        <begin position="666"/>
        <end position="714"/>
    </location>
</feature>
<feature type="region of interest" description="Interaction with dcp2" evidence="4">
    <location>
        <begin position="789"/>
        <end position="1076"/>
    </location>
</feature>
<feature type="region of interest" description="Disordered" evidence="2">
    <location>
        <begin position="892"/>
        <end position="934"/>
    </location>
</feature>
<feature type="compositionally biased region" description="Low complexity" evidence="2">
    <location>
        <begin position="1"/>
        <end position="19"/>
    </location>
</feature>
<feature type="compositionally biased region" description="Low complexity" evidence="2">
    <location>
        <begin position="53"/>
        <end position="69"/>
    </location>
</feature>
<feature type="compositionally biased region" description="Polar residues" evidence="2">
    <location>
        <begin position="70"/>
        <end position="82"/>
    </location>
</feature>
<feature type="compositionally biased region" description="Polar residues" evidence="2">
    <location>
        <begin position="153"/>
        <end position="173"/>
    </location>
</feature>
<feature type="compositionally biased region" description="Low complexity" evidence="2">
    <location>
        <begin position="174"/>
        <end position="184"/>
    </location>
</feature>
<feature type="compositionally biased region" description="Polar residues" evidence="2">
    <location>
        <begin position="185"/>
        <end position="195"/>
    </location>
</feature>
<feature type="compositionally biased region" description="Polar residues" evidence="2">
    <location>
        <begin position="669"/>
        <end position="688"/>
    </location>
</feature>
<feature type="compositionally biased region" description="Basic and acidic residues" evidence="2">
    <location>
        <begin position="695"/>
        <end position="706"/>
    </location>
</feature>
<feature type="modified residue" description="Phosphoserine" evidence="3">
    <location>
        <position position="671"/>
    </location>
</feature>
<feature type="modified residue" description="Phosphoserine" evidence="3">
    <location>
        <position position="673"/>
    </location>
</feature>
<feature type="modified residue" description="Phosphothreonine" evidence="3">
    <location>
        <position position="674"/>
    </location>
</feature>
<feature type="modified residue" description="Phosphoserine" evidence="3">
    <location>
        <position position="1075"/>
    </location>
</feature>
<feature type="helix" evidence="9">
    <location>
        <begin position="936"/>
        <end position="948"/>
    </location>
</feature>
<feature type="helix" evidence="9">
    <location>
        <begin position="951"/>
        <end position="960"/>
    </location>
</feature>
<feature type="helix" evidence="9">
    <location>
        <begin position="964"/>
        <end position="970"/>
    </location>
</feature>
<feature type="helix" evidence="9">
    <location>
        <begin position="975"/>
        <end position="981"/>
    </location>
</feature>
<feature type="helix" evidence="9">
    <location>
        <begin position="984"/>
        <end position="996"/>
    </location>
</feature>
<feature type="helix" evidence="9">
    <location>
        <begin position="1002"/>
        <end position="1018"/>
    </location>
</feature>
<feature type="helix" evidence="9">
    <location>
        <begin position="1024"/>
        <end position="1026"/>
    </location>
</feature>
<feature type="turn" evidence="9">
    <location>
        <begin position="1027"/>
        <end position="1029"/>
    </location>
</feature>
<feature type="helix" evidence="9">
    <location>
        <begin position="1030"/>
        <end position="1044"/>
    </location>
</feature>
<feature type="helix" evidence="9">
    <location>
        <begin position="1045"/>
        <end position="1047"/>
    </location>
</feature>
<feature type="helix" evidence="9">
    <location>
        <begin position="1050"/>
        <end position="1069"/>
    </location>
</feature>